<reference key="1">
    <citation type="journal article" date="2002" name="Mol. Biol. Evol.">
        <title>The plastid chromosome of Atropa belladonna and its comparison with that of Nicotiana tabacum: the role of RNA editing in generating divergence in the process of plant speciation.</title>
        <authorList>
            <person name="Schmitz-Linneweber C."/>
            <person name="Regel R."/>
            <person name="Du T.G."/>
            <person name="Hupfer H."/>
            <person name="Herrmann R.G."/>
            <person name="Maier R.M."/>
        </authorList>
    </citation>
    <scope>NUCLEOTIDE SEQUENCE [LARGE SCALE GENOMIC DNA]</scope>
    <source>
        <strain>cv. Ab5p(kan)</strain>
    </source>
</reference>
<geneLocation type="chloroplast"/>
<dbReference type="EMBL" id="AJ316582">
    <property type="protein sequence ID" value="CAC88088.1"/>
    <property type="molecule type" value="Genomic_DNA"/>
</dbReference>
<dbReference type="EMBL" id="AJ316582">
    <property type="protein sequence ID" value="CAC88107.1"/>
    <property type="molecule type" value="Genomic_DNA"/>
</dbReference>
<dbReference type="GO" id="GO:0009507">
    <property type="term" value="C:chloroplast"/>
    <property type="evidence" value="ECO:0007669"/>
    <property type="project" value="UniProtKB-SubCell"/>
</dbReference>
<dbReference type="InterPro" id="IPR019645">
    <property type="entry name" value="Uncharacterised_Ycf15"/>
</dbReference>
<dbReference type="Pfam" id="PF10705">
    <property type="entry name" value="Ycf15"/>
    <property type="match status" value="1"/>
</dbReference>
<organism>
    <name type="scientific">Atropa belladonna</name>
    <name type="common">Belladonna</name>
    <name type="synonym">Deadly nightshade</name>
    <dbReference type="NCBI Taxonomy" id="33113"/>
    <lineage>
        <taxon>Eukaryota</taxon>
        <taxon>Viridiplantae</taxon>
        <taxon>Streptophyta</taxon>
        <taxon>Embryophyta</taxon>
        <taxon>Tracheophyta</taxon>
        <taxon>Spermatophyta</taxon>
        <taxon>Magnoliopsida</taxon>
        <taxon>eudicotyledons</taxon>
        <taxon>Gunneridae</taxon>
        <taxon>Pentapetalae</taxon>
        <taxon>asterids</taxon>
        <taxon>lamiids</taxon>
        <taxon>Solanales</taxon>
        <taxon>Solanaceae</taxon>
        <taxon>Solanoideae</taxon>
        <taxon>Hyoscyameae</taxon>
        <taxon>Atropa</taxon>
    </lineage>
</organism>
<keyword id="KW-0150">Chloroplast</keyword>
<keyword id="KW-0934">Plastid</keyword>
<name>YCF15_ATRBE</name>
<accession>Q7FNR5</accession>
<sequence length="70" mass="8540">MLLLKHGRIEILDQNTMYGWYELPKQEFLNSKQPVQIFTTKKYWILFRIGPERRRKAGMPTGVYYIEFTR</sequence>
<proteinExistence type="uncertain"/>
<evidence type="ECO:0000305" key="1"/>
<feature type="chain" id="PRO_0000299584" description="Putative uncharacterized protein ycf15">
    <location>
        <begin position="1"/>
        <end position="70"/>
    </location>
</feature>
<comment type="subcellular location">
    <subcellularLocation>
        <location>Plastid</location>
        <location>Chloroplast</location>
    </subcellularLocation>
</comment>
<comment type="similarity">
    <text evidence="1">Belongs to the ycf15 family.</text>
</comment>
<comment type="caution">
    <text evidence="1">Could be the product of a pseudogene.</text>
</comment>
<protein>
    <recommendedName>
        <fullName>Putative uncharacterized protein ycf15</fullName>
    </recommendedName>
</protein>
<gene>
    <name type="primary">ycf15-A</name>
</gene>
<gene>
    <name type="primary">ycf15-B</name>
</gene>